<evidence type="ECO:0000255" key="1">
    <source>
        <dbReference type="HAMAP-Rule" id="MF_00773"/>
    </source>
</evidence>
<evidence type="ECO:0000305" key="2"/>
<feature type="chain" id="PRO_1000017351" description="Large ribosomal subunit protein eL24">
    <location>
        <begin position="1"/>
        <end position="61"/>
    </location>
</feature>
<feature type="zinc finger region" description="C4-type" evidence="1">
    <location>
        <begin position="7"/>
        <end position="37"/>
    </location>
</feature>
<feature type="binding site" evidence="1">
    <location>
        <position position="7"/>
    </location>
    <ligand>
        <name>Zn(2+)</name>
        <dbReference type="ChEBI" id="CHEBI:29105"/>
    </ligand>
</feature>
<feature type="binding site" evidence="1">
    <location>
        <position position="10"/>
    </location>
    <ligand>
        <name>Zn(2+)</name>
        <dbReference type="ChEBI" id="CHEBI:29105"/>
    </ligand>
</feature>
<feature type="binding site" evidence="1">
    <location>
        <position position="33"/>
    </location>
    <ligand>
        <name>Zn(2+)</name>
        <dbReference type="ChEBI" id="CHEBI:29105"/>
    </ligand>
</feature>
<feature type="binding site" evidence="1">
    <location>
        <position position="37"/>
    </location>
    <ligand>
        <name>Zn(2+)</name>
        <dbReference type="ChEBI" id="CHEBI:29105"/>
    </ligand>
</feature>
<proteinExistence type="inferred from homology"/>
<name>RL24E_HYPBU</name>
<keyword id="KW-0479">Metal-binding</keyword>
<keyword id="KW-1185">Reference proteome</keyword>
<keyword id="KW-0687">Ribonucleoprotein</keyword>
<keyword id="KW-0689">Ribosomal protein</keyword>
<keyword id="KW-0694">RNA-binding</keyword>
<keyword id="KW-0699">rRNA-binding</keyword>
<keyword id="KW-0862">Zinc</keyword>
<keyword id="KW-0863">Zinc-finger</keyword>
<gene>
    <name evidence="1" type="primary">rpl24e</name>
    <name type="ordered locus">Hbut_0547</name>
</gene>
<organism>
    <name type="scientific">Hyperthermus butylicus (strain DSM 5456 / JCM 9403 / PLM1-5)</name>
    <dbReference type="NCBI Taxonomy" id="415426"/>
    <lineage>
        <taxon>Archaea</taxon>
        <taxon>Thermoproteota</taxon>
        <taxon>Thermoprotei</taxon>
        <taxon>Desulfurococcales</taxon>
        <taxon>Pyrodictiaceae</taxon>
        <taxon>Hyperthermus</taxon>
    </lineage>
</organism>
<accession>A2BK96</accession>
<dbReference type="EMBL" id="CP000493">
    <property type="protein sequence ID" value="ABM80407.1"/>
    <property type="molecule type" value="Genomic_DNA"/>
</dbReference>
<dbReference type="RefSeq" id="WP_011821725.1">
    <property type="nucleotide sequence ID" value="NC_008818.1"/>
</dbReference>
<dbReference type="SMR" id="A2BK96"/>
<dbReference type="STRING" id="415426.Hbut_0547"/>
<dbReference type="EnsemblBacteria" id="ABM80407">
    <property type="protein sequence ID" value="ABM80407"/>
    <property type="gene ID" value="Hbut_0547"/>
</dbReference>
<dbReference type="GeneID" id="4782077"/>
<dbReference type="KEGG" id="hbu:Hbut_0547"/>
<dbReference type="eggNOG" id="arCOG01950">
    <property type="taxonomic scope" value="Archaea"/>
</dbReference>
<dbReference type="HOGENOM" id="CLU_190191_0_0_2"/>
<dbReference type="OrthoDB" id="55506at2157"/>
<dbReference type="Proteomes" id="UP000002593">
    <property type="component" value="Chromosome"/>
</dbReference>
<dbReference type="GO" id="GO:1990904">
    <property type="term" value="C:ribonucleoprotein complex"/>
    <property type="evidence" value="ECO:0007669"/>
    <property type="project" value="UniProtKB-KW"/>
</dbReference>
<dbReference type="GO" id="GO:0005840">
    <property type="term" value="C:ribosome"/>
    <property type="evidence" value="ECO:0007669"/>
    <property type="project" value="UniProtKB-KW"/>
</dbReference>
<dbReference type="GO" id="GO:0019843">
    <property type="term" value="F:rRNA binding"/>
    <property type="evidence" value="ECO:0007669"/>
    <property type="project" value="UniProtKB-UniRule"/>
</dbReference>
<dbReference type="GO" id="GO:0003735">
    <property type="term" value="F:structural constituent of ribosome"/>
    <property type="evidence" value="ECO:0007669"/>
    <property type="project" value="InterPro"/>
</dbReference>
<dbReference type="GO" id="GO:0008270">
    <property type="term" value="F:zinc ion binding"/>
    <property type="evidence" value="ECO:0007669"/>
    <property type="project" value="UniProtKB-UniRule"/>
</dbReference>
<dbReference type="GO" id="GO:0006412">
    <property type="term" value="P:translation"/>
    <property type="evidence" value="ECO:0007669"/>
    <property type="project" value="UniProtKB-UniRule"/>
</dbReference>
<dbReference type="CDD" id="cd00472">
    <property type="entry name" value="Ribosomal_L24e_L24"/>
    <property type="match status" value="1"/>
</dbReference>
<dbReference type="FunFam" id="2.30.170.20:FF:000001">
    <property type="entry name" value="probable ribosome biogenesis protein RLP24"/>
    <property type="match status" value="1"/>
</dbReference>
<dbReference type="Gene3D" id="2.30.170.20">
    <property type="entry name" value="Ribosomal protein L24e"/>
    <property type="match status" value="1"/>
</dbReference>
<dbReference type="HAMAP" id="MF_00773">
    <property type="entry name" value="Ribosomal_eL24"/>
    <property type="match status" value="1"/>
</dbReference>
<dbReference type="InterPro" id="IPR038630">
    <property type="entry name" value="L24e/L24_sf"/>
</dbReference>
<dbReference type="InterPro" id="IPR056366">
    <property type="entry name" value="Ribosomal_eL24"/>
</dbReference>
<dbReference type="InterPro" id="IPR055345">
    <property type="entry name" value="Ribosomal_eL24-rel_arc"/>
</dbReference>
<dbReference type="InterPro" id="IPR000988">
    <property type="entry name" value="Ribosomal_eL24-rel_N"/>
</dbReference>
<dbReference type="InterPro" id="IPR023442">
    <property type="entry name" value="Ribosomal_eL24_CS"/>
</dbReference>
<dbReference type="InterPro" id="IPR011017">
    <property type="entry name" value="TRASH_dom"/>
</dbReference>
<dbReference type="NCBIfam" id="NF034186">
    <property type="entry name" value="PRK14891.1-1"/>
    <property type="match status" value="1"/>
</dbReference>
<dbReference type="PANTHER" id="PTHR10792">
    <property type="entry name" value="60S RIBOSOMAL PROTEIN L24"/>
    <property type="match status" value="1"/>
</dbReference>
<dbReference type="PANTHER" id="PTHR10792:SF1">
    <property type="entry name" value="RIBOSOMAL PROTEIN L24"/>
    <property type="match status" value="1"/>
</dbReference>
<dbReference type="Pfam" id="PF01246">
    <property type="entry name" value="Ribosomal_L24e"/>
    <property type="match status" value="1"/>
</dbReference>
<dbReference type="SMART" id="SM00746">
    <property type="entry name" value="TRASH"/>
    <property type="match status" value="1"/>
</dbReference>
<dbReference type="SUPFAM" id="SSF57716">
    <property type="entry name" value="Glucocorticoid receptor-like (DNA-binding domain)"/>
    <property type="match status" value="1"/>
</dbReference>
<dbReference type="PROSITE" id="PS01073">
    <property type="entry name" value="RIBOSOMAL_L24E"/>
    <property type="match status" value="1"/>
</dbReference>
<comment type="function">
    <text evidence="1">Binds to the 23S rRNA.</text>
</comment>
<comment type="cofactor">
    <cofactor evidence="1">
        <name>Zn(2+)</name>
        <dbReference type="ChEBI" id="CHEBI:29105"/>
    </cofactor>
    <text evidence="1">Binds 1 zinc ion per subunit.</text>
</comment>
<comment type="subunit">
    <text evidence="1">Part of the 50S ribosomal subunit. Forms a cluster with proteins L3 and L14.</text>
</comment>
<comment type="similarity">
    <text evidence="1">Belongs to the eukaryotic ribosomal protein eL24 family.</text>
</comment>
<sequence>MPVVHTCTYCGRSIEPGTGLMYVKNDGSVLWFCSSKCFKLWRMGRDPRKLKWTERYTQLRR</sequence>
<protein>
    <recommendedName>
        <fullName evidence="1">Large ribosomal subunit protein eL24</fullName>
    </recommendedName>
    <alternativeName>
        <fullName evidence="2">50S ribosomal protein L24e</fullName>
    </alternativeName>
</protein>
<reference key="1">
    <citation type="journal article" date="2007" name="Archaea">
        <title>The genome of Hyperthermus butylicus: a sulfur-reducing, peptide fermenting, neutrophilic Crenarchaeote growing up to 108 degrees C.</title>
        <authorList>
            <person name="Bruegger K."/>
            <person name="Chen L."/>
            <person name="Stark M."/>
            <person name="Zibat A."/>
            <person name="Redder P."/>
            <person name="Ruepp A."/>
            <person name="Awayez M."/>
            <person name="She Q."/>
            <person name="Garrett R.A."/>
            <person name="Klenk H.-P."/>
        </authorList>
    </citation>
    <scope>NUCLEOTIDE SEQUENCE [LARGE SCALE GENOMIC DNA]</scope>
    <source>
        <strain>DSM 5456 / JCM 9403 / PLM1-5</strain>
    </source>
</reference>